<proteinExistence type="evidence at transcript level"/>
<feature type="chain" id="PRO_0000439703" description="Indole-3-acetic acid-amido synthetase GH3.10">
    <location>
        <begin position="1"/>
        <end position="591"/>
    </location>
</feature>
<feature type="sequence conflict" description="In Ref. 1; ADM21185." evidence="4" ref="1">
    <original>D</original>
    <variation>H</variation>
    <location>
        <position position="56"/>
    </location>
</feature>
<name>GH310_ARATH</name>
<organism>
    <name type="scientific">Arabidopsis thaliana</name>
    <name type="common">Mouse-ear cress</name>
    <dbReference type="NCBI Taxonomy" id="3702"/>
    <lineage>
        <taxon>Eukaryota</taxon>
        <taxon>Viridiplantae</taxon>
        <taxon>Streptophyta</taxon>
        <taxon>Embryophyta</taxon>
        <taxon>Tracheophyta</taxon>
        <taxon>Spermatophyta</taxon>
        <taxon>Magnoliopsida</taxon>
        <taxon>eudicotyledons</taxon>
        <taxon>Gunneridae</taxon>
        <taxon>Pentapetalae</taxon>
        <taxon>rosids</taxon>
        <taxon>malvids</taxon>
        <taxon>Brassicales</taxon>
        <taxon>Brassicaceae</taxon>
        <taxon>Camelineae</taxon>
        <taxon>Arabidopsis</taxon>
    </lineage>
</organism>
<sequence length="591" mass="66859">METVEAGHDDVIGWFEHVSENACKVQSETLRRILELNSGVEYLRKWLGTVDVEKMDDYTLETLFTSLVPIVSHADLDPYIQRIADGETSPLLTQEPITVLSLSSGTTEGRQKYVPFTRHSAQTTLQIFRLSAAYRSRFYPIREGGRILEFIYAGKEFKTLGGLTVGTATTHYYASEEFKTKQETTKSFTCSPQEVISGGDFGQCTYCHLLLGLHYSSQVEFVASAFSYTIVQAFSFFEEIWREICADIKEGNLSSRITLPKMRKAVLALIRPNPSLASHIEEICLELETNLGWFGLISKLWPNAKFISSIMTGSMLPYLNKLRHYAGGLPLVSADYGSTESWIGVNVDPHLPPEDVSFAVIPTFSYFEFIPLYRRQNQSDICIDGDFVEDKPVPLSQVKLGQEYELVLTTFTGLYRYRLGDVVEVTSFHKGTPKLSFIYRRKLILTINIDKNTEKDLQRVVDKASQLLSRSTRAEVVDFTSHADVIARPGHYVIYWEIRGEADDKALEECCREMDTAFVDYGYVVSRRMNSIGPLELRVVERGTFGKVAERCVGKCGGLNQFKTPRCTTNSVMLDILNDSTIKRFRSSAYD</sequence>
<dbReference type="EC" id="6.3.2.-" evidence="4"/>
<dbReference type="EMBL" id="GU571158">
    <property type="protein sequence ID" value="ADM21185.1"/>
    <property type="molecule type" value="Genomic_DNA"/>
</dbReference>
<dbReference type="EMBL" id="AC005275">
    <property type="protein sequence ID" value="AAD14468.1"/>
    <property type="molecule type" value="Genomic_DNA"/>
</dbReference>
<dbReference type="EMBL" id="AF071527">
    <property type="protein sequence ID" value="AAD11582.1"/>
    <property type="molecule type" value="Genomic_DNA"/>
</dbReference>
<dbReference type="EMBL" id="AL161496">
    <property type="protein sequence ID" value="CAB77825.1"/>
    <property type="molecule type" value="Genomic_DNA"/>
</dbReference>
<dbReference type="EMBL" id="CP002687">
    <property type="protein sequence ID" value="AEE82314.1"/>
    <property type="molecule type" value="Genomic_DNA"/>
</dbReference>
<dbReference type="EMBL" id="CP002687">
    <property type="protein sequence ID" value="ANM66984.1"/>
    <property type="molecule type" value="Genomic_DNA"/>
</dbReference>
<dbReference type="EMBL" id="AY059941">
    <property type="protein sequence ID" value="AAL24423.1"/>
    <property type="molecule type" value="mRNA"/>
</dbReference>
<dbReference type="EMBL" id="BT000061">
    <property type="protein sequence ID" value="AAN15380.1"/>
    <property type="molecule type" value="mRNA"/>
</dbReference>
<dbReference type="PIR" id="B85043">
    <property type="entry name" value="B85043"/>
</dbReference>
<dbReference type="RefSeq" id="NP_001319858.1">
    <property type="nucleotide sequence ID" value="NM_001340446.1"/>
</dbReference>
<dbReference type="RefSeq" id="NP_192249.1">
    <property type="nucleotide sequence ID" value="NM_116578.3"/>
</dbReference>
<dbReference type="SMR" id="Q9ZNS2"/>
<dbReference type="FunCoup" id="Q9ZNS2">
    <property type="interactions" value="1256"/>
</dbReference>
<dbReference type="IntAct" id="Q9ZNS2">
    <property type="interactions" value="2"/>
</dbReference>
<dbReference type="STRING" id="3702.Q9ZNS2"/>
<dbReference type="PaxDb" id="3702-AT4G03400.1"/>
<dbReference type="ProteomicsDB" id="224789"/>
<dbReference type="EnsemblPlants" id="AT4G03400.1">
    <property type="protein sequence ID" value="AT4G03400.1"/>
    <property type="gene ID" value="AT4G03400"/>
</dbReference>
<dbReference type="EnsemblPlants" id="AT4G03400.2">
    <property type="protein sequence ID" value="AT4G03400.2"/>
    <property type="gene ID" value="AT4G03400"/>
</dbReference>
<dbReference type="GeneID" id="827938"/>
<dbReference type="Gramene" id="AT4G03400.1">
    <property type="protein sequence ID" value="AT4G03400.1"/>
    <property type="gene ID" value="AT4G03400"/>
</dbReference>
<dbReference type="Gramene" id="AT4G03400.2">
    <property type="protein sequence ID" value="AT4G03400.2"/>
    <property type="gene ID" value="AT4G03400"/>
</dbReference>
<dbReference type="KEGG" id="ath:AT4G03400"/>
<dbReference type="Araport" id="AT4G03400"/>
<dbReference type="TAIR" id="AT4G03400">
    <property type="gene designation" value="DFL2"/>
</dbReference>
<dbReference type="eggNOG" id="ENOG502QT0R">
    <property type="taxonomic scope" value="Eukaryota"/>
</dbReference>
<dbReference type="HOGENOM" id="CLU_016249_2_1_1"/>
<dbReference type="InParanoid" id="Q9ZNS2"/>
<dbReference type="OMA" id="TDGRQKY"/>
<dbReference type="PhylomeDB" id="Q9ZNS2"/>
<dbReference type="PRO" id="PR:Q9ZNS2"/>
<dbReference type="Proteomes" id="UP000006548">
    <property type="component" value="Chromosome 4"/>
</dbReference>
<dbReference type="ExpressionAtlas" id="Q9ZNS2">
    <property type="expression patterns" value="baseline and differential"/>
</dbReference>
<dbReference type="GO" id="GO:0009507">
    <property type="term" value="C:chloroplast"/>
    <property type="evidence" value="ECO:0007005"/>
    <property type="project" value="TAIR"/>
</dbReference>
<dbReference type="GO" id="GO:0016874">
    <property type="term" value="F:ligase activity"/>
    <property type="evidence" value="ECO:0007669"/>
    <property type="project" value="UniProtKB-KW"/>
</dbReference>
<dbReference type="GO" id="GO:0009416">
    <property type="term" value="P:response to light stimulus"/>
    <property type="evidence" value="ECO:0000270"/>
    <property type="project" value="TAIR"/>
</dbReference>
<dbReference type="InterPro" id="IPR004993">
    <property type="entry name" value="GH3"/>
</dbReference>
<dbReference type="InterPro" id="IPR055378">
    <property type="entry name" value="GH3_C"/>
</dbReference>
<dbReference type="InterPro" id="IPR055377">
    <property type="entry name" value="GH3_M"/>
</dbReference>
<dbReference type="PANTHER" id="PTHR31901">
    <property type="entry name" value="GH3 DOMAIN-CONTAINING PROTEIN"/>
    <property type="match status" value="1"/>
</dbReference>
<dbReference type="PANTHER" id="PTHR31901:SF48">
    <property type="entry name" value="INDOLE-3-ACETIC ACID-AMIDO SYNTHETASE GH3.10"/>
    <property type="match status" value="1"/>
</dbReference>
<dbReference type="Pfam" id="PF03321">
    <property type="entry name" value="GH3"/>
    <property type="match status" value="1"/>
</dbReference>
<dbReference type="Pfam" id="PF23572">
    <property type="entry name" value="GH3_C"/>
    <property type="match status" value="1"/>
</dbReference>
<dbReference type="Pfam" id="PF23571">
    <property type="entry name" value="GH3_M"/>
    <property type="match status" value="1"/>
</dbReference>
<evidence type="ECO:0000250" key="1">
    <source>
        <dbReference type="UniProtKB" id="Q9LSQ4"/>
    </source>
</evidence>
<evidence type="ECO:0000269" key="2">
    <source>
    </source>
</evidence>
<evidence type="ECO:0000303" key="3">
    <source>
    </source>
</evidence>
<evidence type="ECO:0000305" key="4"/>
<evidence type="ECO:0000312" key="5">
    <source>
        <dbReference type="Araport" id="AT4G03400"/>
    </source>
</evidence>
<evidence type="ECO:0000312" key="6">
    <source>
        <dbReference type="EMBL" id="AAD11582.1"/>
    </source>
</evidence>
<evidence type="ECO:0000312" key="7">
    <source>
        <dbReference type="EMBL" id="AAD14468.1"/>
    </source>
</evidence>
<reference key="1">
    <citation type="journal article" date="2010" name="Nat. Genet.">
        <title>Natural variation at strubbelig receptor kinase 3 drives immune-triggered incompatibilities between Arabidopsis thaliana accessions.</title>
        <authorList>
            <person name="Alcazar R."/>
            <person name="Garcia A.V."/>
            <person name="Kronholm I."/>
            <person name="de Meaux J."/>
            <person name="Koornneef M."/>
            <person name="Parker J.E."/>
            <person name="Reymond M."/>
        </authorList>
    </citation>
    <scope>NUCLEOTIDE SEQUENCE [GENOMIC DNA]</scope>
</reference>
<reference key="2">
    <citation type="journal article" date="1999" name="Nature">
        <title>Sequence and analysis of chromosome 4 of the plant Arabidopsis thaliana.</title>
        <authorList>
            <person name="Mayer K.F.X."/>
            <person name="Schueller C."/>
            <person name="Wambutt R."/>
            <person name="Murphy G."/>
            <person name="Volckaert G."/>
            <person name="Pohl T."/>
            <person name="Duesterhoeft A."/>
            <person name="Stiekema W."/>
            <person name="Entian K.-D."/>
            <person name="Terryn N."/>
            <person name="Harris B."/>
            <person name="Ansorge W."/>
            <person name="Brandt P."/>
            <person name="Grivell L.A."/>
            <person name="Rieger M."/>
            <person name="Weichselgartner M."/>
            <person name="de Simone V."/>
            <person name="Obermaier B."/>
            <person name="Mache R."/>
            <person name="Mueller M."/>
            <person name="Kreis M."/>
            <person name="Delseny M."/>
            <person name="Puigdomenech P."/>
            <person name="Watson M."/>
            <person name="Schmidtheini T."/>
            <person name="Reichert B."/>
            <person name="Portetelle D."/>
            <person name="Perez-Alonso M."/>
            <person name="Boutry M."/>
            <person name="Bancroft I."/>
            <person name="Vos P."/>
            <person name="Hoheisel J."/>
            <person name="Zimmermann W."/>
            <person name="Wedler H."/>
            <person name="Ridley P."/>
            <person name="Langham S.-A."/>
            <person name="McCullagh B."/>
            <person name="Bilham L."/>
            <person name="Robben J."/>
            <person name="van der Schueren J."/>
            <person name="Grymonprez B."/>
            <person name="Chuang Y.-J."/>
            <person name="Vandenbussche F."/>
            <person name="Braeken M."/>
            <person name="Weltjens I."/>
            <person name="Voet M."/>
            <person name="Bastiaens I."/>
            <person name="Aert R."/>
            <person name="Defoor E."/>
            <person name="Weitzenegger T."/>
            <person name="Bothe G."/>
            <person name="Ramsperger U."/>
            <person name="Hilbert H."/>
            <person name="Braun M."/>
            <person name="Holzer E."/>
            <person name="Brandt A."/>
            <person name="Peters S."/>
            <person name="van Staveren M."/>
            <person name="Dirkse W."/>
            <person name="Mooijman P."/>
            <person name="Klein Lankhorst R."/>
            <person name="Rose M."/>
            <person name="Hauf J."/>
            <person name="Koetter P."/>
            <person name="Berneiser S."/>
            <person name="Hempel S."/>
            <person name="Feldpausch M."/>
            <person name="Lamberth S."/>
            <person name="Van den Daele H."/>
            <person name="De Keyser A."/>
            <person name="Buysshaert C."/>
            <person name="Gielen J."/>
            <person name="Villarroel R."/>
            <person name="De Clercq R."/>
            <person name="van Montagu M."/>
            <person name="Rogers J."/>
            <person name="Cronin A."/>
            <person name="Quail M.A."/>
            <person name="Bray-Allen S."/>
            <person name="Clark L."/>
            <person name="Doggett J."/>
            <person name="Hall S."/>
            <person name="Kay M."/>
            <person name="Lennard N."/>
            <person name="McLay K."/>
            <person name="Mayes R."/>
            <person name="Pettett A."/>
            <person name="Rajandream M.A."/>
            <person name="Lyne M."/>
            <person name="Benes V."/>
            <person name="Rechmann S."/>
            <person name="Borkova D."/>
            <person name="Bloecker H."/>
            <person name="Scharfe M."/>
            <person name="Grimm M."/>
            <person name="Loehnert T.-H."/>
            <person name="Dose S."/>
            <person name="de Haan M."/>
            <person name="Maarse A.C."/>
            <person name="Schaefer M."/>
            <person name="Mueller-Auer S."/>
            <person name="Gabel C."/>
            <person name="Fuchs M."/>
            <person name="Fartmann B."/>
            <person name="Granderath K."/>
            <person name="Dauner D."/>
            <person name="Herzl A."/>
            <person name="Neumann S."/>
            <person name="Argiriou A."/>
            <person name="Vitale D."/>
            <person name="Liguori R."/>
            <person name="Piravandi E."/>
            <person name="Massenet O."/>
            <person name="Quigley F."/>
            <person name="Clabauld G."/>
            <person name="Muendlein A."/>
            <person name="Felber R."/>
            <person name="Schnabl S."/>
            <person name="Hiller R."/>
            <person name="Schmidt W."/>
            <person name="Lecharny A."/>
            <person name="Aubourg S."/>
            <person name="Chefdor F."/>
            <person name="Cooke R."/>
            <person name="Berger C."/>
            <person name="Monfort A."/>
            <person name="Casacuberta E."/>
            <person name="Gibbons T."/>
            <person name="Weber N."/>
            <person name="Vandenbol M."/>
            <person name="Bargues M."/>
            <person name="Terol J."/>
            <person name="Torres A."/>
            <person name="Perez-Perez A."/>
            <person name="Purnelle B."/>
            <person name="Bent E."/>
            <person name="Johnson S."/>
            <person name="Tacon D."/>
            <person name="Jesse T."/>
            <person name="Heijnen L."/>
            <person name="Schwarz S."/>
            <person name="Scholler P."/>
            <person name="Heber S."/>
            <person name="Francs P."/>
            <person name="Bielke C."/>
            <person name="Frishman D."/>
            <person name="Haase D."/>
            <person name="Lemcke K."/>
            <person name="Mewes H.-W."/>
            <person name="Stocker S."/>
            <person name="Zaccaria P."/>
            <person name="Bevan M."/>
            <person name="Wilson R.K."/>
            <person name="de la Bastide M."/>
            <person name="Habermann K."/>
            <person name="Parnell L."/>
            <person name="Dedhia N."/>
            <person name="Gnoj L."/>
            <person name="Schutz K."/>
            <person name="Huang E."/>
            <person name="Spiegel L."/>
            <person name="Sekhon M."/>
            <person name="Murray J."/>
            <person name="Sheet P."/>
            <person name="Cordes M."/>
            <person name="Abu-Threideh J."/>
            <person name="Stoneking T."/>
            <person name="Kalicki J."/>
            <person name="Graves T."/>
            <person name="Harmon G."/>
            <person name="Edwards J."/>
            <person name="Latreille P."/>
            <person name="Courtney L."/>
            <person name="Cloud J."/>
            <person name="Abbott A."/>
            <person name="Scott K."/>
            <person name="Johnson D."/>
            <person name="Minx P."/>
            <person name="Bentley D."/>
            <person name="Fulton B."/>
            <person name="Miller N."/>
            <person name="Greco T."/>
            <person name="Kemp K."/>
            <person name="Kramer J."/>
            <person name="Fulton L."/>
            <person name="Mardis E."/>
            <person name="Dante M."/>
            <person name="Pepin K."/>
            <person name="Hillier L.W."/>
            <person name="Nelson J."/>
            <person name="Spieth J."/>
            <person name="Ryan E."/>
            <person name="Andrews S."/>
            <person name="Geisel C."/>
            <person name="Layman D."/>
            <person name="Du H."/>
            <person name="Ali J."/>
            <person name="Berghoff A."/>
            <person name="Jones K."/>
            <person name="Drone K."/>
            <person name="Cotton M."/>
            <person name="Joshu C."/>
            <person name="Antonoiu B."/>
            <person name="Zidanic M."/>
            <person name="Strong C."/>
            <person name="Sun H."/>
            <person name="Lamar B."/>
            <person name="Yordan C."/>
            <person name="Ma P."/>
            <person name="Zhong J."/>
            <person name="Preston R."/>
            <person name="Vil D."/>
            <person name="Shekher M."/>
            <person name="Matero A."/>
            <person name="Shah R."/>
            <person name="Swaby I.K."/>
            <person name="O'Shaughnessy A."/>
            <person name="Rodriguez M."/>
            <person name="Hoffman J."/>
            <person name="Till S."/>
            <person name="Granat S."/>
            <person name="Shohdy N."/>
            <person name="Hasegawa A."/>
            <person name="Hameed A."/>
            <person name="Lodhi M."/>
            <person name="Johnson A."/>
            <person name="Chen E."/>
            <person name="Marra M.A."/>
            <person name="Martienssen R."/>
            <person name="McCombie W.R."/>
        </authorList>
    </citation>
    <scope>NUCLEOTIDE SEQUENCE [LARGE SCALE GENOMIC DNA]</scope>
    <source>
        <strain>cv. Columbia</strain>
    </source>
</reference>
<reference key="3">
    <citation type="journal article" date="2017" name="Plant J.">
        <title>Araport11: a complete reannotation of the Arabidopsis thaliana reference genome.</title>
        <authorList>
            <person name="Cheng C.Y."/>
            <person name="Krishnakumar V."/>
            <person name="Chan A.P."/>
            <person name="Thibaud-Nissen F."/>
            <person name="Schobel S."/>
            <person name="Town C.D."/>
        </authorList>
    </citation>
    <scope>GENOME REANNOTATION</scope>
    <source>
        <strain>cv. Columbia</strain>
    </source>
</reference>
<reference key="4">
    <citation type="journal article" date="2003" name="Science">
        <title>Empirical analysis of transcriptional activity in the Arabidopsis genome.</title>
        <authorList>
            <person name="Yamada K."/>
            <person name="Lim J."/>
            <person name="Dale J.M."/>
            <person name="Chen H."/>
            <person name="Shinn P."/>
            <person name="Palm C.J."/>
            <person name="Southwick A.M."/>
            <person name="Wu H.C."/>
            <person name="Kim C.J."/>
            <person name="Nguyen M."/>
            <person name="Pham P.K."/>
            <person name="Cheuk R.F."/>
            <person name="Karlin-Newmann G."/>
            <person name="Liu S.X."/>
            <person name="Lam B."/>
            <person name="Sakano H."/>
            <person name="Wu T."/>
            <person name="Yu G."/>
            <person name="Miranda M."/>
            <person name="Quach H.L."/>
            <person name="Tripp M."/>
            <person name="Chang C.H."/>
            <person name="Lee J.M."/>
            <person name="Toriumi M.J."/>
            <person name="Chan M.M."/>
            <person name="Tang C.C."/>
            <person name="Onodera C.S."/>
            <person name="Deng J.M."/>
            <person name="Akiyama K."/>
            <person name="Ansari Y."/>
            <person name="Arakawa T."/>
            <person name="Banh J."/>
            <person name="Banno F."/>
            <person name="Bowser L."/>
            <person name="Brooks S.Y."/>
            <person name="Carninci P."/>
            <person name="Chao Q."/>
            <person name="Choy N."/>
            <person name="Enju A."/>
            <person name="Goldsmith A.D."/>
            <person name="Gurjal M."/>
            <person name="Hansen N.F."/>
            <person name="Hayashizaki Y."/>
            <person name="Johnson-Hopson C."/>
            <person name="Hsuan V.W."/>
            <person name="Iida K."/>
            <person name="Karnes M."/>
            <person name="Khan S."/>
            <person name="Koesema E."/>
            <person name="Ishida J."/>
            <person name="Jiang P.X."/>
            <person name="Jones T."/>
            <person name="Kawai J."/>
            <person name="Kamiya A."/>
            <person name="Meyers C."/>
            <person name="Nakajima M."/>
            <person name="Narusaka M."/>
            <person name="Seki M."/>
            <person name="Sakurai T."/>
            <person name="Satou M."/>
            <person name="Tamse R."/>
            <person name="Vaysberg M."/>
            <person name="Wallender E.K."/>
            <person name="Wong C."/>
            <person name="Yamamura Y."/>
            <person name="Yuan S."/>
            <person name="Shinozaki K."/>
            <person name="Davis R.W."/>
            <person name="Theologis A."/>
            <person name="Ecker J.R."/>
        </authorList>
    </citation>
    <scope>NUCLEOTIDE SEQUENCE [LARGE SCALE MRNA]</scope>
    <source>
        <strain>cv. Columbia</strain>
    </source>
</reference>
<reference key="5">
    <citation type="journal article" date="2003" name="Plant Cell Physiol.">
        <title>DFL2, a new member of the Arabidopsis GH3 gene family, is involved in red light-specific hypocotyl elongation.</title>
        <authorList>
            <person name="Takase T."/>
            <person name="Nakazawa M."/>
            <person name="Ishikawa A."/>
            <person name="Manabe K."/>
            <person name="Matsui M."/>
        </authorList>
    </citation>
    <scope>FUNCTION</scope>
    <scope>TISSUE SPECIFICITY</scope>
</reference>
<accession>Q9ZNS2</accession>
<accession>E0Y432</accession>
<keyword id="KW-0436">Ligase</keyword>
<keyword id="KW-1185">Reference proteome</keyword>
<comment type="function">
    <text evidence="1 2">Catalyzes the synthesis of indole-3-acetic acid (IAA)-amino acid conjugates, providing a mechanism for the plant to cope with the presence of excess auxin (By similarity). Involved in red light-specific hypocotyl elongation. May act downstream of a red light signal transduction and determine the degree of hypocotyl elongation (PubMed:14581632).</text>
</comment>
<comment type="tissue specificity">
    <text evidence="2">Expressed in cotyledons and hypocotyls.</text>
</comment>
<comment type="similarity">
    <text evidence="4">Belongs to the IAA-amido conjugating enzyme family.</text>
</comment>
<gene>
    <name evidence="3" type="primary">GH3.10</name>
    <name evidence="3" type="synonym">DFL2</name>
    <name evidence="5" type="ordered locus">At4g03400</name>
    <name evidence="7" type="ORF">F4C21.36</name>
    <name evidence="6" type="ORF">F9H3.1</name>
</gene>
<protein>
    <recommendedName>
        <fullName evidence="4">Indole-3-acetic acid-amido synthetase GH3.10</fullName>
        <ecNumber evidence="4">6.3.2.-</ecNumber>
    </recommendedName>
    <alternativeName>
        <fullName evidence="4">Auxin-responsive GH3-like protein 10</fullName>
    </alternativeName>
    <alternativeName>
        <fullName evidence="3">Protein DWARF IN LIGHT 2</fullName>
    </alternativeName>
</protein>